<accession>Q9FAS2</accession>
<protein>
    <recommendedName>
        <fullName evidence="1">Urease accessory protein UreG</fullName>
    </recommendedName>
</protein>
<comment type="function">
    <text evidence="1">Facilitates the functional incorporation of the urease nickel metallocenter. This process requires GTP hydrolysis, probably effectuated by UreG.</text>
</comment>
<comment type="subunit">
    <text evidence="1">Homodimer. UreD, UreF and UreG form a complex that acts as a GTP-hydrolysis-dependent molecular chaperone, activating the urease apoprotein by helping to assemble the nickel containing metallocenter of UreC. The UreE protein probably delivers the nickel.</text>
</comment>
<comment type="subcellular location">
    <subcellularLocation>
        <location evidence="1">Cytoplasm</location>
    </subcellularLocation>
</comment>
<comment type="similarity">
    <text evidence="1">Belongs to the SIMIBI class G3E GTPase family. UreG subfamily.</text>
</comment>
<feature type="chain" id="PRO_0000347456" description="Urease accessory protein UreG">
    <location>
        <begin position="1"/>
        <end position="212"/>
    </location>
</feature>
<feature type="binding site" evidence="1">
    <location>
        <begin position="19"/>
        <end position="26"/>
    </location>
    <ligand>
        <name>GTP</name>
        <dbReference type="ChEBI" id="CHEBI:37565"/>
    </ligand>
</feature>
<name>UREG_VIBPH</name>
<keyword id="KW-0143">Chaperone</keyword>
<keyword id="KW-0963">Cytoplasm</keyword>
<keyword id="KW-0342">GTP-binding</keyword>
<keyword id="KW-0996">Nickel insertion</keyword>
<keyword id="KW-0547">Nucleotide-binding</keyword>
<proteinExistence type="inferred from homology"/>
<dbReference type="EMBL" id="AB455531">
    <property type="protein sequence ID" value="BAB13791.1"/>
    <property type="molecule type" value="Genomic_DNA"/>
</dbReference>
<dbReference type="RefSeq" id="WP_353569436.1">
    <property type="nucleotide sequence ID" value="NZ_OX328359.1"/>
</dbReference>
<dbReference type="SMR" id="Q9FAS2"/>
<dbReference type="GO" id="GO:0005737">
    <property type="term" value="C:cytoplasm"/>
    <property type="evidence" value="ECO:0007669"/>
    <property type="project" value="UniProtKB-SubCell"/>
</dbReference>
<dbReference type="GO" id="GO:0005525">
    <property type="term" value="F:GTP binding"/>
    <property type="evidence" value="ECO:0007669"/>
    <property type="project" value="UniProtKB-KW"/>
</dbReference>
<dbReference type="GO" id="GO:0003924">
    <property type="term" value="F:GTPase activity"/>
    <property type="evidence" value="ECO:0007669"/>
    <property type="project" value="InterPro"/>
</dbReference>
<dbReference type="GO" id="GO:0016151">
    <property type="term" value="F:nickel cation binding"/>
    <property type="evidence" value="ECO:0007669"/>
    <property type="project" value="UniProtKB-UniRule"/>
</dbReference>
<dbReference type="GO" id="GO:0043419">
    <property type="term" value="P:urea catabolic process"/>
    <property type="evidence" value="ECO:0007669"/>
    <property type="project" value="InterPro"/>
</dbReference>
<dbReference type="CDD" id="cd05540">
    <property type="entry name" value="UreG"/>
    <property type="match status" value="1"/>
</dbReference>
<dbReference type="FunFam" id="3.40.50.300:FF:000208">
    <property type="entry name" value="Urease accessory protein UreG"/>
    <property type="match status" value="1"/>
</dbReference>
<dbReference type="Gene3D" id="3.40.50.300">
    <property type="entry name" value="P-loop containing nucleotide triphosphate hydrolases"/>
    <property type="match status" value="1"/>
</dbReference>
<dbReference type="HAMAP" id="MF_01389">
    <property type="entry name" value="UreG"/>
    <property type="match status" value="1"/>
</dbReference>
<dbReference type="InterPro" id="IPR003495">
    <property type="entry name" value="CobW/HypB/UreG_nucleotide-bd"/>
</dbReference>
<dbReference type="InterPro" id="IPR027417">
    <property type="entry name" value="P-loop_NTPase"/>
</dbReference>
<dbReference type="InterPro" id="IPR004400">
    <property type="entry name" value="UreG"/>
</dbReference>
<dbReference type="NCBIfam" id="TIGR00101">
    <property type="entry name" value="ureG"/>
    <property type="match status" value="1"/>
</dbReference>
<dbReference type="PANTHER" id="PTHR31715">
    <property type="entry name" value="UREASE ACCESSORY PROTEIN G"/>
    <property type="match status" value="1"/>
</dbReference>
<dbReference type="PANTHER" id="PTHR31715:SF0">
    <property type="entry name" value="UREASE ACCESSORY PROTEIN G"/>
    <property type="match status" value="1"/>
</dbReference>
<dbReference type="Pfam" id="PF02492">
    <property type="entry name" value="cobW"/>
    <property type="match status" value="1"/>
</dbReference>
<dbReference type="PIRSF" id="PIRSF005624">
    <property type="entry name" value="Ni-bind_GTPase"/>
    <property type="match status" value="1"/>
</dbReference>
<dbReference type="SUPFAM" id="SSF52540">
    <property type="entry name" value="P-loop containing nucleoside triphosphate hydrolases"/>
    <property type="match status" value="1"/>
</dbReference>
<evidence type="ECO:0000255" key="1">
    <source>
        <dbReference type="HAMAP-Rule" id="MF_01389"/>
    </source>
</evidence>
<reference key="1">
    <citation type="journal article" date="2000" name="Infect. Immun.">
        <title>Genetic characterization of DNA region containing the trh and ure genes of Vibrio parahaemolyticus.</title>
        <authorList>
            <person name="Park K.-S."/>
            <person name="Iida T."/>
            <person name="Yamaichi Y."/>
            <person name="Oyagi T."/>
            <person name="Yamamoto K."/>
            <person name="Honda T."/>
        </authorList>
    </citation>
    <scope>NUCLEOTIDE SEQUENCE [GENOMIC DNA]</scope>
    <source>
        <strain>TH3996</strain>
    </source>
</reference>
<reference key="2">
    <citation type="journal article" date="2009" name="Infect. Immun.">
        <title>Identification and characterization of a novel type III secretion system in trh-positive Vibrio parahaemolyticus strain TH3996 reveal genetic lineage and diversity of pathogenic machinery beyond the species level.</title>
        <authorList>
            <person name="Okada N."/>
            <person name="Iida T."/>
            <person name="Park K.-S."/>
            <person name="Goto N."/>
            <person name="Yasunaga T."/>
            <person name="Hiyoshi H."/>
            <person name="Matsuda S."/>
            <person name="Kodama T."/>
            <person name="Honda T."/>
        </authorList>
    </citation>
    <scope>NUCLEOTIDE SEQUENCE [GENOMIC DNA]</scope>
    <source>
        <strain>TH3996</strain>
    </source>
</reference>
<gene>
    <name evidence="1" type="primary">ureG</name>
</gene>
<organism>
    <name type="scientific">Vibrio parahaemolyticus</name>
    <dbReference type="NCBI Taxonomy" id="670"/>
    <lineage>
        <taxon>Bacteria</taxon>
        <taxon>Pseudomonadati</taxon>
        <taxon>Pseudomonadota</taxon>
        <taxon>Gammaproteobacteria</taxon>
        <taxon>Vibrionales</taxon>
        <taxon>Vibrionaceae</taxon>
        <taxon>Vibrio</taxon>
    </lineage>
</organism>
<sequence length="212" mass="23159">MQEYNNQDYKQPLRIGVGGPVGSGKTALLEILCKTIRDKYQIAVVTNDIYTQEDAKILTRAQALDADRIIGVETGGCPHTAIREDASMNLAAVEELAKRHKNLDLVFVESGGDNLSATFSPELADLTIYVIDVAEGEKIPRKGGPGITRSDLLVINKIDLAPYVGASLDVMEADTARMRPEKPYVFTNLKEGIGLQKIIDFIVDKGMLPKVD</sequence>